<comment type="similarity">
    <text evidence="2">Belongs to the aldo/keto reductase family. Aldo/keto reductase 2 subfamily.</text>
</comment>
<keyword id="KW-0521">NADP</keyword>
<keyword id="KW-0560">Oxidoreductase</keyword>
<keyword id="KW-1185">Reference proteome</keyword>
<organism>
    <name type="scientific">Mycobacterium tuberculosis (strain ATCC 25618 / H37Rv)</name>
    <dbReference type="NCBI Taxonomy" id="83332"/>
    <lineage>
        <taxon>Bacteria</taxon>
        <taxon>Bacillati</taxon>
        <taxon>Actinomycetota</taxon>
        <taxon>Actinomycetes</taxon>
        <taxon>Mycobacteriales</taxon>
        <taxon>Mycobacteriaceae</taxon>
        <taxon>Mycobacterium</taxon>
        <taxon>Mycobacterium tuberculosis complex</taxon>
    </lineage>
</organism>
<protein>
    <recommendedName>
        <fullName>Uncharacterized oxidoreductase Rv2298</fullName>
        <ecNumber>1.-.-.-</ecNumber>
    </recommendedName>
</protein>
<proteinExistence type="evidence at protein level"/>
<accession>P9WQA7</accession>
<accession>L0T9E3</accession>
<accession>P63484</accession>
<accession>Q50668</accession>
<sequence>MKYLDVDGIGQVSRIGLGTWQFGSREWGYGDRYATGAARDIVKRARALGVTLFDTAEIYGLGKSERILGEALGDDRTEVVVASKVFPVAPFPAVIKNRERASARRLQLNRIPLYQIHQPNPVVPDSVIMPGMRDLLDSGDIGAAGVSNYSLARWRKADAALGRPVVSNQVHFSLAHPDALEDLVPFAELENRIVIAYSPLAQGLLGGKYGLENRPGGVRALNPLFGTENLRRIEPLLATLRAIAVDVDAKPAQVALAWLISLPGVVAIPGASSVEQLEFNVAAADIELSAQSRDALTDAARAFRPVSTGRFLTDMVREKVSRR</sequence>
<gene>
    <name type="ordered locus">Rv2298</name>
    <name type="ORF">MTCY339.12c</name>
</gene>
<evidence type="ECO:0000250" key="1"/>
<evidence type="ECO:0000305" key="2"/>
<dbReference type="EC" id="1.-.-.-"/>
<dbReference type="EMBL" id="AL123456">
    <property type="protein sequence ID" value="CCP45080.1"/>
    <property type="molecule type" value="Genomic_DNA"/>
</dbReference>
<dbReference type="PIR" id="F70733">
    <property type="entry name" value="F70733"/>
</dbReference>
<dbReference type="RefSeq" id="NP_216814.1">
    <property type="nucleotide sequence ID" value="NC_000962.3"/>
</dbReference>
<dbReference type="RefSeq" id="WP_003902161.1">
    <property type="nucleotide sequence ID" value="NZ_NVQJ01000012.1"/>
</dbReference>
<dbReference type="SMR" id="P9WQA7"/>
<dbReference type="FunCoup" id="P9WQA7">
    <property type="interactions" value="220"/>
</dbReference>
<dbReference type="STRING" id="83332.Rv2298"/>
<dbReference type="PaxDb" id="83332-Rv2298"/>
<dbReference type="DNASU" id="887344"/>
<dbReference type="GeneID" id="887344"/>
<dbReference type="KEGG" id="mtu:Rv2298"/>
<dbReference type="KEGG" id="mtv:RVBD_2298"/>
<dbReference type="TubercuList" id="Rv2298"/>
<dbReference type="eggNOG" id="COG0667">
    <property type="taxonomic scope" value="Bacteria"/>
</dbReference>
<dbReference type="InParanoid" id="P9WQA7"/>
<dbReference type="OrthoDB" id="9768793at2"/>
<dbReference type="PhylomeDB" id="P9WQA7"/>
<dbReference type="Proteomes" id="UP000001584">
    <property type="component" value="Chromosome"/>
</dbReference>
<dbReference type="GO" id="GO:0005737">
    <property type="term" value="C:cytoplasm"/>
    <property type="evidence" value="ECO:0000318"/>
    <property type="project" value="GO_Central"/>
</dbReference>
<dbReference type="GO" id="GO:0009274">
    <property type="term" value="C:peptidoglycan-based cell wall"/>
    <property type="evidence" value="ECO:0007005"/>
    <property type="project" value="MTBBASE"/>
</dbReference>
<dbReference type="GO" id="GO:0005886">
    <property type="term" value="C:plasma membrane"/>
    <property type="evidence" value="ECO:0007005"/>
    <property type="project" value="MTBBASE"/>
</dbReference>
<dbReference type="GO" id="GO:0004033">
    <property type="term" value="F:aldo-keto reductase (NADPH) activity"/>
    <property type="evidence" value="ECO:0000318"/>
    <property type="project" value="GO_Central"/>
</dbReference>
<dbReference type="CDD" id="cd19093">
    <property type="entry name" value="AKR_AtPLR-like"/>
    <property type="match status" value="1"/>
</dbReference>
<dbReference type="Gene3D" id="3.20.20.100">
    <property type="entry name" value="NADP-dependent oxidoreductase domain"/>
    <property type="match status" value="1"/>
</dbReference>
<dbReference type="InterPro" id="IPR050523">
    <property type="entry name" value="AKR_Detox_Biosynth"/>
</dbReference>
<dbReference type="InterPro" id="IPR023210">
    <property type="entry name" value="NADP_OxRdtase_dom"/>
</dbReference>
<dbReference type="InterPro" id="IPR036812">
    <property type="entry name" value="NADP_OxRdtase_dom_sf"/>
</dbReference>
<dbReference type="PANTHER" id="PTHR43364:SF4">
    <property type="entry name" value="NAD(P)-LINKED OXIDOREDUCTASE SUPERFAMILY PROTEIN"/>
    <property type="match status" value="1"/>
</dbReference>
<dbReference type="PANTHER" id="PTHR43364">
    <property type="entry name" value="NADH-SPECIFIC METHYLGLYOXAL REDUCTASE-RELATED"/>
    <property type="match status" value="1"/>
</dbReference>
<dbReference type="Pfam" id="PF00248">
    <property type="entry name" value="Aldo_ket_red"/>
    <property type="match status" value="1"/>
</dbReference>
<dbReference type="SUPFAM" id="SSF51430">
    <property type="entry name" value="NAD(P)-linked oxidoreductase"/>
    <property type="match status" value="1"/>
</dbReference>
<reference key="1">
    <citation type="journal article" date="1998" name="Nature">
        <title>Deciphering the biology of Mycobacterium tuberculosis from the complete genome sequence.</title>
        <authorList>
            <person name="Cole S.T."/>
            <person name="Brosch R."/>
            <person name="Parkhill J."/>
            <person name="Garnier T."/>
            <person name="Churcher C.M."/>
            <person name="Harris D.E."/>
            <person name="Gordon S.V."/>
            <person name="Eiglmeier K."/>
            <person name="Gas S."/>
            <person name="Barry C.E. III"/>
            <person name="Tekaia F."/>
            <person name="Badcock K."/>
            <person name="Basham D."/>
            <person name="Brown D."/>
            <person name="Chillingworth T."/>
            <person name="Connor R."/>
            <person name="Davies R.M."/>
            <person name="Devlin K."/>
            <person name="Feltwell T."/>
            <person name="Gentles S."/>
            <person name="Hamlin N."/>
            <person name="Holroyd S."/>
            <person name="Hornsby T."/>
            <person name="Jagels K."/>
            <person name="Krogh A."/>
            <person name="McLean J."/>
            <person name="Moule S."/>
            <person name="Murphy L.D."/>
            <person name="Oliver S."/>
            <person name="Osborne J."/>
            <person name="Quail M.A."/>
            <person name="Rajandream M.A."/>
            <person name="Rogers J."/>
            <person name="Rutter S."/>
            <person name="Seeger K."/>
            <person name="Skelton S."/>
            <person name="Squares S."/>
            <person name="Squares R."/>
            <person name="Sulston J.E."/>
            <person name="Taylor K."/>
            <person name="Whitehead S."/>
            <person name="Barrell B.G."/>
        </authorList>
    </citation>
    <scope>NUCLEOTIDE SEQUENCE [LARGE SCALE GENOMIC DNA]</scope>
    <source>
        <strain>ATCC 25618 / H37Rv</strain>
    </source>
</reference>
<reference key="2">
    <citation type="journal article" date="2011" name="Mol. Cell. Proteomics">
        <title>Proteogenomic analysis of Mycobacterium tuberculosis by high resolution mass spectrometry.</title>
        <authorList>
            <person name="Kelkar D.S."/>
            <person name="Kumar D."/>
            <person name="Kumar P."/>
            <person name="Balakrishnan L."/>
            <person name="Muthusamy B."/>
            <person name="Yadav A.K."/>
            <person name="Shrivastava P."/>
            <person name="Marimuthu A."/>
            <person name="Anand S."/>
            <person name="Sundaram H."/>
            <person name="Kingsbury R."/>
            <person name="Harsha H.C."/>
            <person name="Nair B."/>
            <person name="Prasad T.S."/>
            <person name="Chauhan D.S."/>
            <person name="Katoch K."/>
            <person name="Katoch V.M."/>
            <person name="Kumar P."/>
            <person name="Chaerkady R."/>
            <person name="Ramachandran S."/>
            <person name="Dash D."/>
            <person name="Pandey A."/>
        </authorList>
    </citation>
    <scope>IDENTIFICATION BY MASS SPECTROMETRY [LARGE SCALE ANALYSIS]</scope>
    <source>
        <strain>ATCC 25618 / H37Rv</strain>
    </source>
</reference>
<feature type="chain" id="PRO_0000070396" description="Uncharacterized oxidoreductase Rv2298">
    <location>
        <begin position="1"/>
        <end position="323"/>
    </location>
</feature>
<feature type="active site" description="Proton donor" evidence="1">
    <location>
        <position position="59"/>
    </location>
</feature>
<feature type="binding site" evidence="1">
    <location>
        <begin position="198"/>
        <end position="208"/>
    </location>
    <ligand>
        <name>NADP(+)</name>
        <dbReference type="ChEBI" id="CHEBI:58349"/>
    </ligand>
</feature>
<name>Y2298_MYCTU</name>